<accession>Q7M4T0</accession>
<accession>Q7RZ78</accession>
<accession>Q8NKJ2</accession>
<sequence length="480" mass="51353">MYPPALTLLLTPGLVAAAIQPQAYASSADGRYKLSSYSAPVRGTGTPGSNSTWKLTIDDTPSGRKQTIKGFGAAVTDSTVSVFNALPSAQRTALLNTLMTTAGANFAMMRHTIASSDLSANPAYSYDDSNGQTDLSLSNFNLGGRGNAMASLLAEMRRLQPGLTILGSPWSPPGWMKLNRAIQGTTVNNNLDHAYASQFAQYFVKYLQAYQAKGATIDAITIQNEPLNSRAQMPTMYIYADEAGDLIQNNIGPALRNAGLDTKIWAYDHNTDQPSYPSTVLSRAGGYVPAVAWHCYASSLDWSVLTTFHNAHPGVEQYMTECWTSAKQPTPWNWAASFTMGPLQNWASGVTAWVLGTDTNDGPHLTGSDACDKCTGLVTVDAAAGTYNLRGDYYMMAQFSKFMKKGAVVMSGTGSWTYGDGSGLESVAATNADDGSRVVVIENKFGNEIYVTVEAKSGEVWSGLVYRNSVVTWVLPAAGA</sequence>
<organism>
    <name type="scientific">Neurospora crassa (strain ATCC 24698 / 74-OR23-1A / CBS 708.71 / DSM 1257 / FGSC 987)</name>
    <dbReference type="NCBI Taxonomy" id="367110"/>
    <lineage>
        <taxon>Eukaryota</taxon>
        <taxon>Fungi</taxon>
        <taxon>Dikarya</taxon>
        <taxon>Ascomycota</taxon>
        <taxon>Pezizomycotina</taxon>
        <taxon>Sordariomycetes</taxon>
        <taxon>Sordariomycetidae</taxon>
        <taxon>Sordariales</taxon>
        <taxon>Sordariaceae</taxon>
        <taxon>Neurospora</taxon>
    </lineage>
</organism>
<keyword id="KW-0903">Direct protein sequencing</keyword>
<keyword id="KW-0325">Glycoprotein</keyword>
<keyword id="KW-0326">Glycosidase</keyword>
<keyword id="KW-0378">Hydrolase</keyword>
<keyword id="KW-1185">Reference proteome</keyword>
<keyword id="KW-0964">Secreted</keyword>
<keyword id="KW-0732">Signal</keyword>
<name>NEG1_NEUCR</name>
<evidence type="ECO:0000250" key="1"/>
<evidence type="ECO:0000255" key="2"/>
<evidence type="ECO:0000269" key="3">
    <source>
    </source>
</evidence>
<evidence type="ECO:0000305" key="4"/>
<reference key="1">
    <citation type="journal article" date="2002" name="Biosci. Biotechnol. Biochem.">
        <title>Cloning and expression of an endo-1,6-beta-D-glucanase gene (neg1) from Neurospora crassa.</title>
        <authorList>
            <person name="Oyama S."/>
            <person name="Yamagata Y."/>
            <person name="Abe K."/>
            <person name="Nakajima T."/>
        </authorList>
    </citation>
    <scope>NUCLEOTIDE SEQUENCE [MRNA]</scope>
    <scope>PROTEIN SEQUENCE OF 18-35; 243-257; 323-330 AND 426-435</scope>
    <scope>CHARACTERIZATION</scope>
    <source>
        <strain>ATCC 10336 / CBS 304.59 / FGSC 1757 / NBRC 6068 / IMI 53238</strain>
    </source>
</reference>
<reference key="2">
    <citation type="journal article" date="2003" name="Nucleic Acids Res.">
        <title>What's in the genome of a filamentous fungus? Analysis of the Neurospora genome sequence.</title>
        <authorList>
            <person name="Mannhaupt G."/>
            <person name="Montrone C."/>
            <person name="Haase D."/>
            <person name="Mewes H.-W."/>
            <person name="Aign V."/>
            <person name="Hoheisel J.D."/>
            <person name="Fartmann B."/>
            <person name="Nyakatura G."/>
            <person name="Kempken F."/>
            <person name="Maier J."/>
            <person name="Schulte U."/>
        </authorList>
    </citation>
    <scope>NUCLEOTIDE SEQUENCE [LARGE SCALE GENOMIC DNA]</scope>
    <source>
        <strain>ATCC 24698 / 74-OR23-1A / CBS 708.71 / DSM 1257 / FGSC 987</strain>
    </source>
</reference>
<reference key="3">
    <citation type="journal article" date="2003" name="Nature">
        <title>The genome sequence of the filamentous fungus Neurospora crassa.</title>
        <authorList>
            <person name="Galagan J.E."/>
            <person name="Calvo S.E."/>
            <person name="Borkovich K.A."/>
            <person name="Selker E.U."/>
            <person name="Read N.D."/>
            <person name="Jaffe D.B."/>
            <person name="FitzHugh W."/>
            <person name="Ma L.-J."/>
            <person name="Smirnov S."/>
            <person name="Purcell S."/>
            <person name="Rehman B."/>
            <person name="Elkins T."/>
            <person name="Engels R."/>
            <person name="Wang S."/>
            <person name="Nielsen C.B."/>
            <person name="Butler J."/>
            <person name="Endrizzi M."/>
            <person name="Qui D."/>
            <person name="Ianakiev P."/>
            <person name="Bell-Pedersen D."/>
            <person name="Nelson M.A."/>
            <person name="Werner-Washburne M."/>
            <person name="Selitrennikoff C.P."/>
            <person name="Kinsey J.A."/>
            <person name="Braun E.L."/>
            <person name="Zelter A."/>
            <person name="Schulte U."/>
            <person name="Kothe G.O."/>
            <person name="Jedd G."/>
            <person name="Mewes H.-W."/>
            <person name="Staben C."/>
            <person name="Marcotte E."/>
            <person name="Greenberg D."/>
            <person name="Roy A."/>
            <person name="Foley K."/>
            <person name="Naylor J."/>
            <person name="Stange-Thomann N."/>
            <person name="Barrett R."/>
            <person name="Gnerre S."/>
            <person name="Kamal M."/>
            <person name="Kamvysselis M."/>
            <person name="Mauceli E.W."/>
            <person name="Bielke C."/>
            <person name="Rudd S."/>
            <person name="Frishman D."/>
            <person name="Krystofova S."/>
            <person name="Rasmussen C."/>
            <person name="Metzenberg R.L."/>
            <person name="Perkins D.D."/>
            <person name="Kroken S."/>
            <person name="Cogoni C."/>
            <person name="Macino G."/>
            <person name="Catcheside D.E.A."/>
            <person name="Li W."/>
            <person name="Pratt R.J."/>
            <person name="Osmani S.A."/>
            <person name="DeSouza C.P.C."/>
            <person name="Glass N.L."/>
            <person name="Orbach M.J."/>
            <person name="Berglund J.A."/>
            <person name="Voelker R."/>
            <person name="Yarden O."/>
            <person name="Plamann M."/>
            <person name="Seiler S."/>
            <person name="Dunlap J.C."/>
            <person name="Radford A."/>
            <person name="Aramayo R."/>
            <person name="Natvig D.O."/>
            <person name="Alex L.A."/>
            <person name="Mannhaupt G."/>
            <person name="Ebbole D.J."/>
            <person name="Freitag M."/>
            <person name="Paulsen I."/>
            <person name="Sachs M.S."/>
            <person name="Lander E.S."/>
            <person name="Nusbaum C."/>
            <person name="Birren B.W."/>
        </authorList>
    </citation>
    <scope>NUCLEOTIDE SEQUENCE [LARGE SCALE GENOMIC DNA]</scope>
    <source>
        <strain>ATCC 24698 / 74-OR23-1A / CBS 708.71 / DSM 1257 / FGSC 987</strain>
    </source>
</reference>
<dbReference type="EC" id="3.2.1.75"/>
<dbReference type="EMBL" id="AB073820">
    <property type="protein sequence ID" value="BAB91213.1"/>
    <property type="molecule type" value="mRNA"/>
</dbReference>
<dbReference type="EMBL" id="BX908809">
    <property type="protein sequence ID" value="CAF06053.1"/>
    <property type="molecule type" value="Genomic_DNA"/>
</dbReference>
<dbReference type="EMBL" id="CM002239">
    <property type="protein sequence ID" value="EAA28236.1"/>
    <property type="molecule type" value="Genomic_DNA"/>
</dbReference>
<dbReference type="PIR" id="JC7866">
    <property type="entry name" value="JC7866"/>
</dbReference>
<dbReference type="RefSeq" id="XP_957472.1">
    <property type="nucleotide sequence ID" value="XM_952379.2"/>
</dbReference>
<dbReference type="SMR" id="Q7M4T0"/>
<dbReference type="STRING" id="367110.Q7M4T0"/>
<dbReference type="CAZy" id="GH30">
    <property type="family name" value="Glycoside Hydrolase Family 30"/>
</dbReference>
<dbReference type="GlyCosmos" id="Q7M4T0">
    <property type="glycosylation" value="1 site, No reported glycans"/>
</dbReference>
<dbReference type="PaxDb" id="5141-EFNCRP00000005200"/>
<dbReference type="EnsemblFungi" id="EAA28236">
    <property type="protein sequence ID" value="EAA28236"/>
    <property type="gene ID" value="NCU04395"/>
</dbReference>
<dbReference type="GeneID" id="3873626"/>
<dbReference type="KEGG" id="ncr:NCU04395"/>
<dbReference type="VEuPathDB" id="FungiDB:NCU04395"/>
<dbReference type="HOGENOM" id="CLU_014379_3_1_1"/>
<dbReference type="InParanoid" id="Q7M4T0"/>
<dbReference type="OMA" id="FGGIAWH"/>
<dbReference type="OrthoDB" id="2160638at2759"/>
<dbReference type="BRENDA" id="3.2.1.75">
    <property type="organism ID" value="3627"/>
</dbReference>
<dbReference type="Proteomes" id="UP000001805">
    <property type="component" value="Chromosome 4, Linkage Group IV"/>
</dbReference>
<dbReference type="GO" id="GO:0005576">
    <property type="term" value="C:extracellular region"/>
    <property type="evidence" value="ECO:0007669"/>
    <property type="project" value="UniProtKB-SubCell"/>
</dbReference>
<dbReference type="GO" id="GO:0016020">
    <property type="term" value="C:membrane"/>
    <property type="evidence" value="ECO:0007669"/>
    <property type="project" value="GOC"/>
</dbReference>
<dbReference type="GO" id="GO:0046557">
    <property type="term" value="F:glucan endo-1,6-beta-glucosidase activity"/>
    <property type="evidence" value="ECO:0007669"/>
    <property type="project" value="UniProtKB-EC"/>
</dbReference>
<dbReference type="GO" id="GO:0004348">
    <property type="term" value="F:glucosylceramidase activity"/>
    <property type="evidence" value="ECO:0000318"/>
    <property type="project" value="GO_Central"/>
</dbReference>
<dbReference type="GO" id="GO:0006680">
    <property type="term" value="P:glucosylceramide catabolic process"/>
    <property type="evidence" value="ECO:0000318"/>
    <property type="project" value="GO_Central"/>
</dbReference>
<dbReference type="FunFam" id="3.20.20.80:FF:000128">
    <property type="entry name" value="Endo-1,6-beta-D-glucanase neg1"/>
    <property type="match status" value="1"/>
</dbReference>
<dbReference type="Gene3D" id="3.20.20.80">
    <property type="entry name" value="Glycosidases"/>
    <property type="match status" value="1"/>
</dbReference>
<dbReference type="Gene3D" id="2.60.40.1180">
    <property type="entry name" value="Golgi alpha-mannosidase II"/>
    <property type="match status" value="1"/>
</dbReference>
<dbReference type="InterPro" id="IPR001139">
    <property type="entry name" value="Glyco_hydro_30"/>
</dbReference>
<dbReference type="InterPro" id="IPR033453">
    <property type="entry name" value="Glyco_hydro_30_TIM-barrel"/>
</dbReference>
<dbReference type="InterPro" id="IPR013780">
    <property type="entry name" value="Glyco_hydro_b"/>
</dbReference>
<dbReference type="InterPro" id="IPR017853">
    <property type="entry name" value="Glycoside_hydrolase_SF"/>
</dbReference>
<dbReference type="PANTHER" id="PTHR11069">
    <property type="entry name" value="GLUCOSYLCERAMIDASE"/>
    <property type="match status" value="1"/>
</dbReference>
<dbReference type="PANTHER" id="PTHR11069:SF23">
    <property type="entry name" value="LYSOSOMAL ACID GLUCOSYLCERAMIDASE"/>
    <property type="match status" value="1"/>
</dbReference>
<dbReference type="Pfam" id="PF02055">
    <property type="entry name" value="Glyco_hydro_30"/>
    <property type="match status" value="1"/>
</dbReference>
<dbReference type="PRINTS" id="PR00843">
    <property type="entry name" value="GLHYDRLASE30"/>
</dbReference>
<dbReference type="SUPFAM" id="SSF51445">
    <property type="entry name" value="(Trans)glycosidases"/>
    <property type="match status" value="1"/>
</dbReference>
<proteinExistence type="evidence at protein level"/>
<gene>
    <name type="primary">neg-1</name>
    <name type="ORF">29E8.200</name>
    <name type="ORF">NCU04395</name>
</gene>
<protein>
    <recommendedName>
        <fullName>Endo-1,6-beta-D-glucanase</fullName>
        <ecNumber>3.2.1.75</ecNumber>
    </recommendedName>
    <alternativeName>
        <fullName>Beta-1,6-glucanase Neg1</fullName>
    </alternativeName>
    <alternativeName>
        <fullName>Glucan endo-1,6-beta-glucosidase</fullName>
    </alternativeName>
</protein>
<comment type="function">
    <text>Partially degrades N.crassa cell wall beta-D-glucan, liberating small amounts of oligosaccharides.</text>
</comment>
<comment type="catalytic activity">
    <reaction>
        <text>Random hydrolysis of (1-&gt;6)-linkages in (1-&gt;6)-beta-D-glucans.</text>
        <dbReference type="EC" id="3.2.1.75"/>
    </reaction>
</comment>
<comment type="subcellular location">
    <subcellularLocation>
        <location>Secreted</location>
    </subcellularLocation>
</comment>
<comment type="similarity">
    <text evidence="4">Belongs to the glycosyl hydrolase 30 family.</text>
</comment>
<feature type="signal peptide" evidence="3">
    <location>
        <begin position="1"/>
        <end position="17"/>
    </location>
</feature>
<feature type="chain" id="PRO_0000012180" description="Endo-1,6-beta-D-glucanase">
    <location>
        <begin position="18"/>
        <end position="480"/>
    </location>
</feature>
<feature type="active site" description="Proton donor" evidence="2">
    <location>
        <position position="225"/>
    </location>
</feature>
<feature type="active site" description="Nucleophile" evidence="1">
    <location>
        <position position="321"/>
    </location>
</feature>
<feature type="glycosylation site" description="N-linked (GlcNAc...) asparagine" evidence="2">
    <location>
        <position position="50"/>
    </location>
</feature>
<feature type="sequence conflict" description="In Ref. 1; BAB91213." evidence="4" ref="1">
    <original>T</original>
    <variation>P</variation>
    <location>
        <position position="101"/>
    </location>
</feature>
<feature type="sequence conflict" description="In Ref. 1; BAB91213." evidence="4" ref="1">
    <original>G</original>
    <variation>D</variation>
    <location>
        <position position="131"/>
    </location>
</feature>
<feature type="sequence conflict" description="In Ref. 1; BAB91213." evidence="4" ref="1">
    <original>G</original>
    <variation>D</variation>
    <location>
        <position position="144"/>
    </location>
</feature>
<feature type="sequence conflict" description="In Ref. 1; BAB91213." evidence="4" ref="1">
    <original>A</original>
    <variation>V</variation>
    <location>
        <position position="181"/>
    </location>
</feature>
<feature type="sequence conflict" description="In Ref. 1; BAB91213." evidence="4" ref="1">
    <original>T</original>
    <variation>K</variation>
    <location>
        <position position="216"/>
    </location>
</feature>
<feature type="sequence conflict" description="In Ref. 1; BAB91213." evidence="4" ref="1">
    <original>S</original>
    <variation>A</variation>
    <location>
        <position position="278"/>
    </location>
</feature>
<feature type="sequence conflict" description="In Ref. 1; BAB91213." evidence="4" ref="1">
    <original>S</original>
    <variation>T</variation>
    <location>
        <position position="303"/>
    </location>
</feature>
<feature type="sequence conflict" description="In Ref. 1; BAB91213." evidence="4" ref="1">
    <original>K</original>
    <variation>R</variation>
    <location>
        <position position="327"/>
    </location>
</feature>
<feature type="sequence conflict" description="In Ref. 1; BAB91213." evidence="4" ref="1">
    <original>T</original>
    <variation>M</variation>
    <location>
        <position position="379"/>
    </location>
</feature>
<feature type="sequence conflict" description="In Ref. 1; BAB91213." evidence="4" ref="1">
    <original>A</original>
    <variation>T</variation>
    <location>
        <position position="382"/>
    </location>
</feature>